<feature type="chain" id="PRO_0000300678" description="Low molecular weight protein-tyrosine-phosphatase PtpB">
    <location>
        <begin position="1"/>
        <end position="139"/>
    </location>
</feature>
<feature type="active site" description="Nucleophile" evidence="2">
    <location>
        <position position="7"/>
    </location>
</feature>
<feature type="active site" evidence="2">
    <location>
        <position position="13"/>
    </location>
</feature>
<feature type="active site" description="Proton donor" evidence="2">
    <location>
        <position position="111"/>
    </location>
</feature>
<comment type="function">
    <text evidence="1">Dephosphorylates the phosphotyrosine-containing proteins.</text>
</comment>
<comment type="catalytic activity">
    <reaction>
        <text>O-phospho-L-tyrosyl-[protein] + H2O = L-tyrosyl-[protein] + phosphate</text>
        <dbReference type="Rhea" id="RHEA:10684"/>
        <dbReference type="Rhea" id="RHEA-COMP:10136"/>
        <dbReference type="Rhea" id="RHEA-COMP:20101"/>
        <dbReference type="ChEBI" id="CHEBI:15377"/>
        <dbReference type="ChEBI" id="CHEBI:43474"/>
        <dbReference type="ChEBI" id="CHEBI:46858"/>
        <dbReference type="ChEBI" id="CHEBI:61978"/>
        <dbReference type="EC" id="3.1.3.48"/>
    </reaction>
</comment>
<comment type="similarity">
    <text evidence="3">Belongs to the low molecular weight phosphotyrosine protein phosphatase family.</text>
</comment>
<name>PTPB_STAA8</name>
<gene>
    <name type="primary">ptpB</name>
    <name type="ordered locus">SAOUHSC_02356</name>
</gene>
<evidence type="ECO:0000250" key="1"/>
<evidence type="ECO:0000250" key="2">
    <source>
        <dbReference type="UniProtKB" id="P11064"/>
    </source>
</evidence>
<evidence type="ECO:0000305" key="3"/>
<proteinExistence type="inferred from homology"/>
<organism>
    <name type="scientific">Staphylococcus aureus (strain NCTC 8325 / PS 47)</name>
    <dbReference type="NCBI Taxonomy" id="93061"/>
    <lineage>
        <taxon>Bacteria</taxon>
        <taxon>Bacillati</taxon>
        <taxon>Bacillota</taxon>
        <taxon>Bacilli</taxon>
        <taxon>Bacillales</taxon>
        <taxon>Staphylococcaceae</taxon>
        <taxon>Staphylococcus</taxon>
    </lineage>
</organism>
<protein>
    <recommendedName>
        <fullName>Low molecular weight protein-tyrosine-phosphatase PtpB</fullName>
        <ecNumber>3.1.3.48</ecNumber>
    </recommendedName>
    <alternativeName>
        <fullName>Phosphotyrosine phosphatase B</fullName>
        <shortName>PTPase B</shortName>
    </alternativeName>
</protein>
<dbReference type="EC" id="3.1.3.48"/>
<dbReference type="EMBL" id="CP000253">
    <property type="protein sequence ID" value="ABD31387.1"/>
    <property type="molecule type" value="Genomic_DNA"/>
</dbReference>
<dbReference type="RefSeq" id="WP_000697334.1">
    <property type="nucleotide sequence ID" value="NZ_LS483365.1"/>
</dbReference>
<dbReference type="RefSeq" id="YP_500832.1">
    <property type="nucleotide sequence ID" value="NC_007795.1"/>
</dbReference>
<dbReference type="SMR" id="Q2FWE3"/>
<dbReference type="STRING" id="93061.SAOUHSC_02356"/>
<dbReference type="PaxDb" id="1280-SAXN108_2360"/>
<dbReference type="GeneID" id="3919399"/>
<dbReference type="KEGG" id="sao:SAOUHSC_02356"/>
<dbReference type="PATRIC" id="fig|93061.5.peg.2133"/>
<dbReference type="eggNOG" id="COG0394">
    <property type="taxonomic scope" value="Bacteria"/>
</dbReference>
<dbReference type="HOGENOM" id="CLU_071415_1_2_9"/>
<dbReference type="OrthoDB" id="9784339at2"/>
<dbReference type="PHI-base" id="PHI:11296"/>
<dbReference type="PHI-base" id="PHI:11719"/>
<dbReference type="PRO" id="PR:Q2FWE3"/>
<dbReference type="Proteomes" id="UP000008816">
    <property type="component" value="Chromosome"/>
</dbReference>
<dbReference type="GO" id="GO:0004725">
    <property type="term" value="F:protein tyrosine phosphatase activity"/>
    <property type="evidence" value="ECO:0000318"/>
    <property type="project" value="GO_Central"/>
</dbReference>
<dbReference type="CDD" id="cd16344">
    <property type="entry name" value="LMWPAP"/>
    <property type="match status" value="1"/>
</dbReference>
<dbReference type="Gene3D" id="3.40.50.2300">
    <property type="match status" value="1"/>
</dbReference>
<dbReference type="InterPro" id="IPR050438">
    <property type="entry name" value="LMW_PTPase"/>
</dbReference>
<dbReference type="InterPro" id="IPR023485">
    <property type="entry name" value="Ptyr_pPase"/>
</dbReference>
<dbReference type="InterPro" id="IPR036196">
    <property type="entry name" value="Ptyr_pPase_sf"/>
</dbReference>
<dbReference type="InterPro" id="IPR017867">
    <property type="entry name" value="Tyr_phospatase_low_mol_wt"/>
</dbReference>
<dbReference type="PANTHER" id="PTHR11717">
    <property type="entry name" value="LOW MOLECULAR WEIGHT PROTEIN TYROSINE PHOSPHATASE"/>
    <property type="match status" value="1"/>
</dbReference>
<dbReference type="PANTHER" id="PTHR11717:SF31">
    <property type="entry name" value="LOW MOLECULAR WEIGHT PROTEIN-TYROSINE-PHOSPHATASE ETP-RELATED"/>
    <property type="match status" value="1"/>
</dbReference>
<dbReference type="Pfam" id="PF01451">
    <property type="entry name" value="LMWPc"/>
    <property type="match status" value="1"/>
</dbReference>
<dbReference type="PRINTS" id="PR00719">
    <property type="entry name" value="LMWPTPASE"/>
</dbReference>
<dbReference type="SMART" id="SM00226">
    <property type="entry name" value="LMWPc"/>
    <property type="match status" value="1"/>
</dbReference>
<dbReference type="SUPFAM" id="SSF52788">
    <property type="entry name" value="Phosphotyrosine protein phosphatases I"/>
    <property type="match status" value="1"/>
</dbReference>
<accession>Q2FWE3</accession>
<sequence>MKILFVCTGNTCRSPLAESIAKEVMPNHQFESRGIFAVNNQGVSNYVEDLVEEHHLAETTLSQQFTEADLKADIILTMSYSHKELIEAHFGLQNHVFTLHEYVKEAGEVIDPYGGTKEMYVHTYEELVSLILKLKDIIC</sequence>
<keyword id="KW-0378">Hydrolase</keyword>
<keyword id="KW-0904">Protein phosphatase</keyword>
<keyword id="KW-1185">Reference proteome</keyword>
<reference key="1">
    <citation type="book" date="2006" name="Gram positive pathogens, 2nd edition">
        <title>The Staphylococcus aureus NCTC 8325 genome.</title>
        <editorList>
            <person name="Fischetti V."/>
            <person name="Novick R."/>
            <person name="Ferretti J."/>
            <person name="Portnoy D."/>
            <person name="Rood J."/>
        </editorList>
        <authorList>
            <person name="Gillaspy A.F."/>
            <person name="Worrell V."/>
            <person name="Orvis J."/>
            <person name="Roe B.A."/>
            <person name="Dyer D.W."/>
            <person name="Iandolo J.J."/>
        </authorList>
    </citation>
    <scope>NUCLEOTIDE SEQUENCE [LARGE SCALE GENOMIC DNA]</scope>
    <source>
        <strain>NCTC 8325 / PS 47</strain>
    </source>
</reference>